<comment type="function">
    <text evidence="1">This protein is involved in the repair of mismatches in DNA. It is required for dam-dependent methyl-directed DNA mismatch repair. May act as a 'molecular matchmaker', a protein that promotes the formation of a stable complex between two or more DNA-binding proteins in an ATP-dependent manner without itself being part of a final effector complex.</text>
</comment>
<comment type="similarity">
    <text evidence="1">Belongs to the DNA mismatch repair MutL/HexB family.</text>
</comment>
<proteinExistence type="inferred from homology"/>
<name>MUTL_HISS2</name>
<accession>B0UUU5</accession>
<gene>
    <name evidence="1" type="primary">mutL</name>
    <name type="ordered locus">HSM_1568</name>
</gene>
<keyword id="KW-0227">DNA damage</keyword>
<keyword id="KW-0234">DNA repair</keyword>
<organism>
    <name type="scientific">Histophilus somni (strain 2336)</name>
    <name type="common">Haemophilus somnus</name>
    <dbReference type="NCBI Taxonomy" id="228400"/>
    <lineage>
        <taxon>Bacteria</taxon>
        <taxon>Pseudomonadati</taxon>
        <taxon>Pseudomonadota</taxon>
        <taxon>Gammaproteobacteria</taxon>
        <taxon>Pasteurellales</taxon>
        <taxon>Pasteurellaceae</taxon>
        <taxon>Histophilus</taxon>
    </lineage>
</organism>
<dbReference type="EMBL" id="CP000947">
    <property type="protein sequence ID" value="ACA31327.1"/>
    <property type="molecule type" value="Genomic_DNA"/>
</dbReference>
<dbReference type="RefSeq" id="WP_012340708.1">
    <property type="nucleotide sequence ID" value="NC_010519.1"/>
</dbReference>
<dbReference type="SMR" id="B0UUU5"/>
<dbReference type="STRING" id="228400.HSM_1568"/>
<dbReference type="GeneID" id="31487872"/>
<dbReference type="KEGG" id="hsm:HSM_1568"/>
<dbReference type="HOGENOM" id="CLU_004131_5_1_6"/>
<dbReference type="GO" id="GO:0032300">
    <property type="term" value="C:mismatch repair complex"/>
    <property type="evidence" value="ECO:0007669"/>
    <property type="project" value="InterPro"/>
</dbReference>
<dbReference type="GO" id="GO:0005524">
    <property type="term" value="F:ATP binding"/>
    <property type="evidence" value="ECO:0007669"/>
    <property type="project" value="InterPro"/>
</dbReference>
<dbReference type="GO" id="GO:0016887">
    <property type="term" value="F:ATP hydrolysis activity"/>
    <property type="evidence" value="ECO:0007669"/>
    <property type="project" value="InterPro"/>
</dbReference>
<dbReference type="GO" id="GO:0140664">
    <property type="term" value="F:ATP-dependent DNA damage sensor activity"/>
    <property type="evidence" value="ECO:0007669"/>
    <property type="project" value="InterPro"/>
</dbReference>
<dbReference type="GO" id="GO:0030983">
    <property type="term" value="F:mismatched DNA binding"/>
    <property type="evidence" value="ECO:0007669"/>
    <property type="project" value="InterPro"/>
</dbReference>
<dbReference type="GO" id="GO:0006298">
    <property type="term" value="P:mismatch repair"/>
    <property type="evidence" value="ECO:0007669"/>
    <property type="project" value="UniProtKB-UniRule"/>
</dbReference>
<dbReference type="CDD" id="cd16926">
    <property type="entry name" value="HATPase_MutL-MLH-PMS-like"/>
    <property type="match status" value="1"/>
</dbReference>
<dbReference type="CDD" id="cd03482">
    <property type="entry name" value="MutL_Trans_MutL"/>
    <property type="match status" value="1"/>
</dbReference>
<dbReference type="FunFam" id="3.30.230.10:FF:000013">
    <property type="entry name" value="DNA mismatch repair endonuclease MutL"/>
    <property type="match status" value="1"/>
</dbReference>
<dbReference type="FunFam" id="3.30.565.10:FF:000003">
    <property type="entry name" value="DNA mismatch repair endonuclease MutL"/>
    <property type="match status" value="1"/>
</dbReference>
<dbReference type="Gene3D" id="3.30.230.10">
    <property type="match status" value="1"/>
</dbReference>
<dbReference type="Gene3D" id="3.30.565.10">
    <property type="entry name" value="Histidine kinase-like ATPase, C-terminal domain"/>
    <property type="match status" value="1"/>
</dbReference>
<dbReference type="Gene3D" id="3.30.1540.20">
    <property type="entry name" value="MutL, C-terminal domain, dimerisation subdomain"/>
    <property type="match status" value="1"/>
</dbReference>
<dbReference type="Gene3D" id="3.30.1370.100">
    <property type="entry name" value="MutL, C-terminal domain, regulatory subdomain"/>
    <property type="match status" value="1"/>
</dbReference>
<dbReference type="HAMAP" id="MF_00149">
    <property type="entry name" value="DNA_mis_repair"/>
    <property type="match status" value="1"/>
</dbReference>
<dbReference type="InterPro" id="IPR014762">
    <property type="entry name" value="DNA_mismatch_repair_CS"/>
</dbReference>
<dbReference type="InterPro" id="IPR020667">
    <property type="entry name" value="DNA_mismatch_repair_MutL"/>
</dbReference>
<dbReference type="InterPro" id="IPR013507">
    <property type="entry name" value="DNA_mismatch_S5_2-like"/>
</dbReference>
<dbReference type="InterPro" id="IPR036890">
    <property type="entry name" value="HATPase_C_sf"/>
</dbReference>
<dbReference type="InterPro" id="IPR002099">
    <property type="entry name" value="MutL/Mlh/PMS"/>
</dbReference>
<dbReference type="InterPro" id="IPR038973">
    <property type="entry name" value="MutL/Mlh/Pms-like"/>
</dbReference>
<dbReference type="InterPro" id="IPR014790">
    <property type="entry name" value="MutL_C"/>
</dbReference>
<dbReference type="InterPro" id="IPR042120">
    <property type="entry name" value="MutL_C_dimsub"/>
</dbReference>
<dbReference type="InterPro" id="IPR042121">
    <property type="entry name" value="MutL_C_regsub"/>
</dbReference>
<dbReference type="InterPro" id="IPR037198">
    <property type="entry name" value="MutL_C_sf"/>
</dbReference>
<dbReference type="InterPro" id="IPR020568">
    <property type="entry name" value="Ribosomal_Su5_D2-typ_SF"/>
</dbReference>
<dbReference type="InterPro" id="IPR014721">
    <property type="entry name" value="Ribsml_uS5_D2-typ_fold_subgr"/>
</dbReference>
<dbReference type="NCBIfam" id="TIGR00585">
    <property type="entry name" value="mutl"/>
    <property type="match status" value="1"/>
</dbReference>
<dbReference type="NCBIfam" id="NF000948">
    <property type="entry name" value="PRK00095.1-1"/>
    <property type="match status" value="1"/>
</dbReference>
<dbReference type="PANTHER" id="PTHR10073">
    <property type="entry name" value="DNA MISMATCH REPAIR PROTEIN MLH, PMS, MUTL"/>
    <property type="match status" value="1"/>
</dbReference>
<dbReference type="PANTHER" id="PTHR10073:SF12">
    <property type="entry name" value="DNA MISMATCH REPAIR PROTEIN MLH1"/>
    <property type="match status" value="1"/>
</dbReference>
<dbReference type="Pfam" id="PF01119">
    <property type="entry name" value="DNA_mis_repair"/>
    <property type="match status" value="1"/>
</dbReference>
<dbReference type="Pfam" id="PF13589">
    <property type="entry name" value="HATPase_c_3"/>
    <property type="match status" value="1"/>
</dbReference>
<dbReference type="Pfam" id="PF08676">
    <property type="entry name" value="MutL_C"/>
    <property type="match status" value="1"/>
</dbReference>
<dbReference type="SMART" id="SM01340">
    <property type="entry name" value="DNA_mis_repair"/>
    <property type="match status" value="1"/>
</dbReference>
<dbReference type="SMART" id="SM00853">
    <property type="entry name" value="MutL_C"/>
    <property type="match status" value="1"/>
</dbReference>
<dbReference type="SUPFAM" id="SSF55874">
    <property type="entry name" value="ATPase domain of HSP90 chaperone/DNA topoisomerase II/histidine kinase"/>
    <property type="match status" value="1"/>
</dbReference>
<dbReference type="SUPFAM" id="SSF118116">
    <property type="entry name" value="DNA mismatch repair protein MutL"/>
    <property type="match status" value="1"/>
</dbReference>
<dbReference type="SUPFAM" id="SSF54211">
    <property type="entry name" value="Ribosomal protein S5 domain 2-like"/>
    <property type="match status" value="1"/>
</dbReference>
<dbReference type="PROSITE" id="PS00058">
    <property type="entry name" value="DNA_MISMATCH_REPAIR_1"/>
    <property type="match status" value="1"/>
</dbReference>
<protein>
    <recommendedName>
        <fullName evidence="1">DNA mismatch repair protein MutL</fullName>
    </recommendedName>
</protein>
<evidence type="ECO:0000255" key="1">
    <source>
        <dbReference type="HAMAP-Rule" id="MF_00149"/>
    </source>
</evidence>
<sequence>MTIKILPPQLANQIAAGEVVERPASVVKELIENSLDAGATHIQIEIENGGANLIRIRDNGIGIAKDELHLALARHATSKIASLDDLEMILSLGFRGEALASISSVSRLTLTSRTAQQNEAWQVYAQGRDMETSITPASHPIGTTVEVANLFFNTPARRKFLRTDKTEFAHIDEVIRRIALAKPQVAFTLTHNNKLIHRYKSAVTNEQKIKRIATICGNDFMQNALHIDWKHNDLHLSGWVIQPQFARHQNDLNYCYINGRMVKDKVITHAIRQAYSEYLSNEKYPAFVLFIDLNPNEVDVNVHPTKHEVRFHQARLIHDFIYQGMTNALTSEQTNIPIQSEQSNPTKVAEPQGIWNLTTHNKGNRATAGKNIFAQQPKDYDKKSSQFKPHFAANYSEVTPKKAVQKAYAELLATHEEKTIASSTLPHQFTHNATHISEQKNVLHALALIENKALLLQQNQQYFLLSIQALQHFNIRLQLQQSNIAQQTLLIPILLRLNKQQYQSWQQQALFFQQSGFDFTDNSAQRRITLNRLPICLRTQNIQKIILQLLDQPHEKYTIFLTALCSHLEFPSLSTFSEAVNLLTKTEQQFSTQHQLEFQSLLVKIEWDHYLDKLQ</sequence>
<reference key="1">
    <citation type="submission" date="2008-02" db="EMBL/GenBank/DDBJ databases">
        <title>Complete sequence of Haemophilus somnus 2336.</title>
        <authorList>
            <consortium name="US DOE Joint Genome Institute"/>
            <person name="Siddaramappa S."/>
            <person name="Duncan A.J."/>
            <person name="Challacombe J.F."/>
            <person name="Rainey D."/>
            <person name="Gillaspy A.F."/>
            <person name="Carson M."/>
            <person name="Gipson J."/>
            <person name="Gipson M."/>
            <person name="Bruce D."/>
            <person name="Detter J.C."/>
            <person name="Han C.S."/>
            <person name="Land M."/>
            <person name="Tapia R."/>
            <person name="Thompson L.S."/>
            <person name="Orvis J."/>
            <person name="Zaitshik J."/>
            <person name="Barnes G."/>
            <person name="Brettin T.S."/>
            <person name="Dyer D.W."/>
            <person name="Inzana T.J."/>
        </authorList>
    </citation>
    <scope>NUCLEOTIDE SEQUENCE [LARGE SCALE GENOMIC DNA]</scope>
    <source>
        <strain>2336</strain>
    </source>
</reference>
<feature type="chain" id="PRO_1000076699" description="DNA mismatch repair protein MutL">
    <location>
        <begin position="1"/>
        <end position="615"/>
    </location>
</feature>